<keyword id="KW-0131">Cell cycle</keyword>
<keyword id="KW-0132">Cell division</keyword>
<keyword id="KW-0997">Cell inner membrane</keyword>
<keyword id="KW-1003">Cell membrane</keyword>
<keyword id="KW-0133">Cell shape</keyword>
<keyword id="KW-0961">Cell wall biogenesis/degradation</keyword>
<keyword id="KW-0328">Glycosyltransferase</keyword>
<keyword id="KW-0472">Membrane</keyword>
<keyword id="KW-0573">Peptidoglycan synthesis</keyword>
<keyword id="KW-0808">Transferase</keyword>
<gene>
    <name evidence="1" type="primary">murG</name>
    <name type="ordered locus">BQ08860</name>
</gene>
<evidence type="ECO:0000255" key="1">
    <source>
        <dbReference type="HAMAP-Rule" id="MF_00033"/>
    </source>
</evidence>
<accession>Q6G124</accession>
<protein>
    <recommendedName>
        <fullName evidence="1">UDP-N-acetylglucosamine--N-acetylmuramyl-(pentapeptide) pyrophosphoryl-undecaprenol N-acetylglucosamine transferase</fullName>
        <ecNumber evidence="1">2.4.1.227</ecNumber>
    </recommendedName>
    <alternativeName>
        <fullName evidence="1">Undecaprenyl-PP-MurNAc-pentapeptide-UDPGlcNAc GlcNAc transferase</fullName>
    </alternativeName>
</protein>
<dbReference type="EC" id="2.4.1.227" evidence="1"/>
<dbReference type="EMBL" id="BX897700">
    <property type="protein sequence ID" value="CAF26365.1"/>
    <property type="molecule type" value="Genomic_DNA"/>
</dbReference>
<dbReference type="RefSeq" id="WP_011179603.1">
    <property type="nucleotide sequence ID" value="NC_005955.1"/>
</dbReference>
<dbReference type="SMR" id="Q6G124"/>
<dbReference type="CAZy" id="GT28">
    <property type="family name" value="Glycosyltransferase Family 28"/>
</dbReference>
<dbReference type="KEGG" id="bqu:BQ08860"/>
<dbReference type="eggNOG" id="COG0707">
    <property type="taxonomic scope" value="Bacteria"/>
</dbReference>
<dbReference type="HOGENOM" id="CLU_037404_2_1_5"/>
<dbReference type="OrthoDB" id="9808936at2"/>
<dbReference type="UniPathway" id="UPA00219"/>
<dbReference type="Proteomes" id="UP000000597">
    <property type="component" value="Chromosome"/>
</dbReference>
<dbReference type="GO" id="GO:0005886">
    <property type="term" value="C:plasma membrane"/>
    <property type="evidence" value="ECO:0007669"/>
    <property type="project" value="UniProtKB-SubCell"/>
</dbReference>
<dbReference type="GO" id="GO:0051991">
    <property type="term" value="F:UDP-N-acetyl-D-glucosamine:N-acetylmuramoyl-L-alanyl-D-glutamyl-meso-2,6-diaminopimelyl-D-alanyl-D-alanine-diphosphoundecaprenol 4-beta-N-acetylglucosaminlytransferase activity"/>
    <property type="evidence" value="ECO:0007669"/>
    <property type="project" value="RHEA"/>
</dbReference>
<dbReference type="GO" id="GO:0050511">
    <property type="term" value="F:undecaprenyldiphospho-muramoylpentapeptide beta-N-acetylglucosaminyltransferase activity"/>
    <property type="evidence" value="ECO:0007669"/>
    <property type="project" value="UniProtKB-UniRule"/>
</dbReference>
<dbReference type="GO" id="GO:0005975">
    <property type="term" value="P:carbohydrate metabolic process"/>
    <property type="evidence" value="ECO:0007669"/>
    <property type="project" value="InterPro"/>
</dbReference>
<dbReference type="GO" id="GO:0051301">
    <property type="term" value="P:cell division"/>
    <property type="evidence" value="ECO:0007669"/>
    <property type="project" value="UniProtKB-KW"/>
</dbReference>
<dbReference type="GO" id="GO:0071555">
    <property type="term" value="P:cell wall organization"/>
    <property type="evidence" value="ECO:0007669"/>
    <property type="project" value="UniProtKB-KW"/>
</dbReference>
<dbReference type="GO" id="GO:0030259">
    <property type="term" value="P:lipid glycosylation"/>
    <property type="evidence" value="ECO:0007669"/>
    <property type="project" value="UniProtKB-UniRule"/>
</dbReference>
<dbReference type="GO" id="GO:0009252">
    <property type="term" value="P:peptidoglycan biosynthetic process"/>
    <property type="evidence" value="ECO:0007669"/>
    <property type="project" value="UniProtKB-UniRule"/>
</dbReference>
<dbReference type="GO" id="GO:0008360">
    <property type="term" value="P:regulation of cell shape"/>
    <property type="evidence" value="ECO:0007669"/>
    <property type="project" value="UniProtKB-KW"/>
</dbReference>
<dbReference type="CDD" id="cd03785">
    <property type="entry name" value="GT28_MurG"/>
    <property type="match status" value="1"/>
</dbReference>
<dbReference type="Gene3D" id="3.40.50.2000">
    <property type="entry name" value="Glycogen Phosphorylase B"/>
    <property type="match status" value="2"/>
</dbReference>
<dbReference type="HAMAP" id="MF_00033">
    <property type="entry name" value="MurG"/>
    <property type="match status" value="1"/>
</dbReference>
<dbReference type="InterPro" id="IPR006009">
    <property type="entry name" value="GlcNAc_MurG"/>
</dbReference>
<dbReference type="InterPro" id="IPR007235">
    <property type="entry name" value="Glyco_trans_28_C"/>
</dbReference>
<dbReference type="InterPro" id="IPR004276">
    <property type="entry name" value="GlycoTrans_28_N"/>
</dbReference>
<dbReference type="NCBIfam" id="TIGR01133">
    <property type="entry name" value="murG"/>
    <property type="match status" value="1"/>
</dbReference>
<dbReference type="PANTHER" id="PTHR21015:SF22">
    <property type="entry name" value="GLYCOSYLTRANSFERASE"/>
    <property type="match status" value="1"/>
</dbReference>
<dbReference type="PANTHER" id="PTHR21015">
    <property type="entry name" value="UDP-N-ACETYLGLUCOSAMINE--N-ACETYLMURAMYL-(PENTAPEPTIDE) PYROPHOSPHORYL-UNDECAPRENOL N-ACETYLGLUCOSAMINE TRANSFERASE 1"/>
    <property type="match status" value="1"/>
</dbReference>
<dbReference type="Pfam" id="PF04101">
    <property type="entry name" value="Glyco_tran_28_C"/>
    <property type="match status" value="1"/>
</dbReference>
<dbReference type="Pfam" id="PF03033">
    <property type="entry name" value="Glyco_transf_28"/>
    <property type="match status" value="1"/>
</dbReference>
<dbReference type="SUPFAM" id="SSF53756">
    <property type="entry name" value="UDP-Glycosyltransferase/glycogen phosphorylase"/>
    <property type="match status" value="1"/>
</dbReference>
<proteinExistence type="inferred from homology"/>
<name>MURG_BARQU</name>
<comment type="function">
    <text evidence="1">Cell wall formation. Catalyzes the transfer of a GlcNAc subunit on undecaprenyl-pyrophosphoryl-MurNAc-pentapeptide (lipid intermediate I) to form undecaprenyl-pyrophosphoryl-MurNAc-(pentapeptide)GlcNAc (lipid intermediate II).</text>
</comment>
<comment type="catalytic activity">
    <reaction evidence="1">
        <text>di-trans,octa-cis-undecaprenyl diphospho-N-acetyl-alpha-D-muramoyl-L-alanyl-D-glutamyl-meso-2,6-diaminopimeloyl-D-alanyl-D-alanine + UDP-N-acetyl-alpha-D-glucosamine = di-trans,octa-cis-undecaprenyl diphospho-[N-acetyl-alpha-D-glucosaminyl-(1-&gt;4)]-N-acetyl-alpha-D-muramoyl-L-alanyl-D-glutamyl-meso-2,6-diaminopimeloyl-D-alanyl-D-alanine + UDP + H(+)</text>
        <dbReference type="Rhea" id="RHEA:31227"/>
        <dbReference type="ChEBI" id="CHEBI:15378"/>
        <dbReference type="ChEBI" id="CHEBI:57705"/>
        <dbReference type="ChEBI" id="CHEBI:58223"/>
        <dbReference type="ChEBI" id="CHEBI:61387"/>
        <dbReference type="ChEBI" id="CHEBI:61388"/>
        <dbReference type="EC" id="2.4.1.227"/>
    </reaction>
</comment>
<comment type="pathway">
    <text evidence="1">Cell wall biogenesis; peptidoglycan biosynthesis.</text>
</comment>
<comment type="subcellular location">
    <subcellularLocation>
        <location evidence="1">Cell inner membrane</location>
        <topology evidence="1">Peripheral membrane protein</topology>
        <orientation evidence="1">Cytoplasmic side</orientation>
    </subcellularLocation>
</comment>
<comment type="similarity">
    <text evidence="1">Belongs to the glycosyltransferase 28 family. MurG subfamily.</text>
</comment>
<feature type="chain" id="PRO_0000315070" description="UDP-N-acetylglucosamine--N-acetylmuramyl-(pentapeptide) pyrophosphoryl-undecaprenol N-acetylglucosamine transferase">
    <location>
        <begin position="1"/>
        <end position="378"/>
    </location>
</feature>
<feature type="binding site" evidence="1">
    <location>
        <begin position="14"/>
        <end position="16"/>
    </location>
    <ligand>
        <name>UDP-N-acetyl-alpha-D-glucosamine</name>
        <dbReference type="ChEBI" id="CHEBI:57705"/>
    </ligand>
</feature>
<feature type="binding site" evidence="1">
    <location>
        <position position="125"/>
    </location>
    <ligand>
        <name>UDP-N-acetyl-alpha-D-glucosamine</name>
        <dbReference type="ChEBI" id="CHEBI:57705"/>
    </ligand>
</feature>
<feature type="binding site" evidence="1">
    <location>
        <position position="165"/>
    </location>
    <ligand>
        <name>UDP-N-acetyl-alpha-D-glucosamine</name>
        <dbReference type="ChEBI" id="CHEBI:57705"/>
    </ligand>
</feature>
<feature type="binding site" evidence="1">
    <location>
        <position position="193"/>
    </location>
    <ligand>
        <name>UDP-N-acetyl-alpha-D-glucosamine</name>
        <dbReference type="ChEBI" id="CHEBI:57705"/>
    </ligand>
</feature>
<feature type="binding site" evidence="1">
    <location>
        <position position="293"/>
    </location>
    <ligand>
        <name>UDP-N-acetyl-alpha-D-glucosamine</name>
        <dbReference type="ChEBI" id="CHEBI:57705"/>
    </ligand>
</feature>
<organism>
    <name type="scientific">Bartonella quintana (strain Toulouse)</name>
    <name type="common">Rochalimaea quintana</name>
    <dbReference type="NCBI Taxonomy" id="283165"/>
    <lineage>
        <taxon>Bacteria</taxon>
        <taxon>Pseudomonadati</taxon>
        <taxon>Pseudomonadota</taxon>
        <taxon>Alphaproteobacteria</taxon>
        <taxon>Hyphomicrobiales</taxon>
        <taxon>Bartonellaceae</taxon>
        <taxon>Bartonella</taxon>
    </lineage>
</organism>
<sequence length="378" mass="41289">MAHKKVIVLVAGGTGGHLFPAEAVAVELRQRGYDVHLVTDRRAKCFVSCVDEEHTHIVSSATFTRRHPFALIKTCWILLKGMGQSLALFYKLRPVLVGGFGGYPTFPPLLVAALMRCVTFIHEQNAIMGRANRVLAVFVHAIAGGLLSQTGTHAHKTLLIGNPMREVVLKAAKIPYRPSLGEKPFHFLVFGGSQGASFFSRIVPEAIALLNNKIRRRLRIIQQVRGEVVELMKTYRSMGVQAEVAPFFNDMAERMAHAHFILSRAGASSVCEIAVIGRPALLIPYPYALDHDQAANAALLARVGGAQIVSEKDLTAQRLASLLTQACCAPHLLEKQALAAKKVGQPYATRRLADMAEALIAGRSLSDVREEFFDENAV</sequence>
<reference key="1">
    <citation type="journal article" date="2004" name="Proc. Natl. Acad. Sci. U.S.A.">
        <title>The louse-borne human pathogen Bartonella quintana is a genomic derivative of the zoonotic agent Bartonella henselae.</title>
        <authorList>
            <person name="Alsmark U.C.M."/>
            <person name="Frank A.C."/>
            <person name="Karlberg E.O."/>
            <person name="Legault B.-A."/>
            <person name="Ardell D.H."/>
            <person name="Canbaeck B."/>
            <person name="Eriksson A.-S."/>
            <person name="Naeslund A.K."/>
            <person name="Handley S.A."/>
            <person name="Huvet M."/>
            <person name="La Scola B."/>
            <person name="Holmberg M."/>
            <person name="Andersson S.G.E."/>
        </authorList>
    </citation>
    <scope>NUCLEOTIDE SEQUENCE [LARGE SCALE GENOMIC DNA]</scope>
    <source>
        <strain>Toulouse</strain>
    </source>
</reference>